<proteinExistence type="inferred from homology"/>
<gene>
    <name evidence="1" type="primary">psd</name>
    <name type="ordered locus">BP1294</name>
</gene>
<feature type="chain" id="PRO_0000029637" description="Phosphatidylserine decarboxylase beta chain" evidence="1">
    <location>
        <begin position="1"/>
        <end position="253"/>
    </location>
</feature>
<feature type="chain" id="PRO_0000029638" description="Phosphatidylserine decarboxylase alpha chain" evidence="1">
    <location>
        <begin position="254"/>
        <end position="297"/>
    </location>
</feature>
<feature type="active site" description="Charge relay system; for autoendoproteolytic cleavage activity" evidence="1">
    <location>
        <position position="92"/>
    </location>
</feature>
<feature type="active site" description="Charge relay system; for autoendoproteolytic cleavage activity" evidence="1">
    <location>
        <position position="149"/>
    </location>
</feature>
<feature type="active site" description="Charge relay system; for autoendoproteolytic cleavage activity" evidence="1">
    <location>
        <position position="254"/>
    </location>
</feature>
<feature type="active site" description="Schiff-base intermediate with substrate; via pyruvic acid; for decarboxylase activity" evidence="1">
    <location>
        <position position="254"/>
    </location>
</feature>
<feature type="site" description="Cleavage (non-hydrolytic); by autocatalysis" evidence="1">
    <location>
        <begin position="253"/>
        <end position="254"/>
    </location>
</feature>
<feature type="modified residue" description="Pyruvic acid (Ser); by autocatalysis" evidence="1">
    <location>
        <position position="254"/>
    </location>
</feature>
<organism>
    <name type="scientific">Bordetella pertussis (strain Tohama I / ATCC BAA-589 / NCTC 13251)</name>
    <dbReference type="NCBI Taxonomy" id="257313"/>
    <lineage>
        <taxon>Bacteria</taxon>
        <taxon>Pseudomonadati</taxon>
        <taxon>Pseudomonadota</taxon>
        <taxon>Betaproteobacteria</taxon>
        <taxon>Burkholderiales</taxon>
        <taxon>Alcaligenaceae</taxon>
        <taxon>Bordetella</taxon>
    </lineage>
</organism>
<comment type="function">
    <text evidence="1">Catalyzes the formation of phosphatidylethanolamine (PtdEtn) from phosphatidylserine (PtdSer).</text>
</comment>
<comment type="catalytic activity">
    <reaction evidence="1">
        <text>a 1,2-diacyl-sn-glycero-3-phospho-L-serine + H(+) = a 1,2-diacyl-sn-glycero-3-phosphoethanolamine + CO2</text>
        <dbReference type="Rhea" id="RHEA:20828"/>
        <dbReference type="ChEBI" id="CHEBI:15378"/>
        <dbReference type="ChEBI" id="CHEBI:16526"/>
        <dbReference type="ChEBI" id="CHEBI:57262"/>
        <dbReference type="ChEBI" id="CHEBI:64612"/>
        <dbReference type="EC" id="4.1.1.65"/>
    </reaction>
</comment>
<comment type="cofactor">
    <cofactor evidence="1">
        <name>pyruvate</name>
        <dbReference type="ChEBI" id="CHEBI:15361"/>
    </cofactor>
    <text evidence="1">Binds 1 pyruvoyl group covalently per subunit.</text>
</comment>
<comment type="pathway">
    <text evidence="1">Phospholipid metabolism; phosphatidylethanolamine biosynthesis; phosphatidylethanolamine from CDP-diacylglycerol: step 2/2.</text>
</comment>
<comment type="subunit">
    <text evidence="1">Heterodimer of a large membrane-associated beta subunit and a small pyruvoyl-containing alpha subunit.</text>
</comment>
<comment type="subcellular location">
    <subcellularLocation>
        <location evidence="1">Cell membrane</location>
        <topology evidence="1">Peripheral membrane protein</topology>
    </subcellularLocation>
</comment>
<comment type="PTM">
    <text evidence="1">Is synthesized initially as an inactive proenzyme. Formation of the active enzyme involves a self-maturation process in which the active site pyruvoyl group is generated from an internal serine residue via an autocatalytic post-translational modification. Two non-identical subunits are generated from the proenzyme in this reaction, and the pyruvate is formed at the N-terminus of the alpha chain, which is derived from the carboxyl end of the proenzyme. The autoendoproteolytic cleavage occurs by a canonical serine protease mechanism, in which the side chain hydroxyl group of the serine supplies its oxygen atom to form the C-terminus of the beta chain, while the remainder of the serine residue undergoes an oxidative deamination to produce ammonia and the pyruvoyl prosthetic group on the alpha chain. During this reaction, the Ser that is part of the protease active site of the proenzyme becomes the pyruvoyl prosthetic group, which constitutes an essential element of the active site of the mature decarboxylase.</text>
</comment>
<comment type="similarity">
    <text evidence="1">Belongs to the phosphatidylserine decarboxylase family. PSD-B subfamily. Prokaryotic type I sub-subfamily.</text>
</comment>
<keyword id="KW-1003">Cell membrane</keyword>
<keyword id="KW-0210">Decarboxylase</keyword>
<keyword id="KW-0444">Lipid biosynthesis</keyword>
<keyword id="KW-0443">Lipid metabolism</keyword>
<keyword id="KW-0456">Lyase</keyword>
<keyword id="KW-0472">Membrane</keyword>
<keyword id="KW-0594">Phospholipid biosynthesis</keyword>
<keyword id="KW-1208">Phospholipid metabolism</keyword>
<keyword id="KW-0670">Pyruvate</keyword>
<keyword id="KW-1185">Reference proteome</keyword>
<keyword id="KW-0865">Zymogen</keyword>
<name>PSD_BORPE</name>
<reference key="1">
    <citation type="journal article" date="2003" name="Nat. Genet.">
        <title>Comparative analysis of the genome sequences of Bordetella pertussis, Bordetella parapertussis and Bordetella bronchiseptica.</title>
        <authorList>
            <person name="Parkhill J."/>
            <person name="Sebaihia M."/>
            <person name="Preston A."/>
            <person name="Murphy L.D."/>
            <person name="Thomson N.R."/>
            <person name="Harris D.E."/>
            <person name="Holden M.T.G."/>
            <person name="Churcher C.M."/>
            <person name="Bentley S.D."/>
            <person name="Mungall K.L."/>
            <person name="Cerdeno-Tarraga A.-M."/>
            <person name="Temple L."/>
            <person name="James K.D."/>
            <person name="Harris B."/>
            <person name="Quail M.A."/>
            <person name="Achtman M."/>
            <person name="Atkin R."/>
            <person name="Baker S."/>
            <person name="Basham D."/>
            <person name="Bason N."/>
            <person name="Cherevach I."/>
            <person name="Chillingworth T."/>
            <person name="Collins M."/>
            <person name="Cronin A."/>
            <person name="Davis P."/>
            <person name="Doggett J."/>
            <person name="Feltwell T."/>
            <person name="Goble A."/>
            <person name="Hamlin N."/>
            <person name="Hauser H."/>
            <person name="Holroyd S."/>
            <person name="Jagels K."/>
            <person name="Leather S."/>
            <person name="Moule S."/>
            <person name="Norberczak H."/>
            <person name="O'Neil S."/>
            <person name="Ormond D."/>
            <person name="Price C."/>
            <person name="Rabbinowitsch E."/>
            <person name="Rutter S."/>
            <person name="Sanders M."/>
            <person name="Saunders D."/>
            <person name="Seeger K."/>
            <person name="Sharp S."/>
            <person name="Simmonds M."/>
            <person name="Skelton J."/>
            <person name="Squares R."/>
            <person name="Squares S."/>
            <person name="Stevens K."/>
            <person name="Unwin L."/>
            <person name="Whitehead S."/>
            <person name="Barrell B.G."/>
            <person name="Maskell D.J."/>
        </authorList>
    </citation>
    <scope>NUCLEOTIDE SEQUENCE [LARGE SCALE GENOMIC DNA]</scope>
    <source>
        <strain>Tohama I / ATCC BAA-589 / NCTC 13251</strain>
    </source>
</reference>
<accession>Q7VYM4</accession>
<sequence>MPFKDQLFLASQYLAPHHLVSRLMGRVADCRAPEIKNRMIARFVRRYNVDMSEALVEDPLAYASFNDFFTRALKPDARPLDDEPGAALCPADGAISQIGAIDNGRIFQAKGHSFGLTDLLGGDAERAAPFAGGQFATIYLSPRDYHRVHMPLAGTLREMVHVPGRLFSVNPLTARSVPELFARNERVACLFDTEHGPMALVLVGAMIVASIETVWAGLVTPHKRQVRSVRYDAAARAPIHLDKGAEMGRFKLGSTVIVLFGPKRLRWLDLPSVRGPVRMGETLALPASTAISFPESE</sequence>
<evidence type="ECO:0000255" key="1">
    <source>
        <dbReference type="HAMAP-Rule" id="MF_00662"/>
    </source>
</evidence>
<dbReference type="EC" id="4.1.1.65" evidence="1"/>
<dbReference type="EMBL" id="BX640414">
    <property type="protein sequence ID" value="CAE41590.1"/>
    <property type="molecule type" value="Genomic_DNA"/>
</dbReference>
<dbReference type="RefSeq" id="NP_880061.1">
    <property type="nucleotide sequence ID" value="NC_002929.2"/>
</dbReference>
<dbReference type="SMR" id="Q7VYM4"/>
<dbReference type="STRING" id="257313.BP1294"/>
<dbReference type="PaxDb" id="257313-BP1294"/>
<dbReference type="KEGG" id="bpe:BP1294"/>
<dbReference type="PATRIC" id="fig|257313.5.peg.1395"/>
<dbReference type="eggNOG" id="COG0688">
    <property type="taxonomic scope" value="Bacteria"/>
</dbReference>
<dbReference type="HOGENOM" id="CLU_029061_4_1_4"/>
<dbReference type="UniPathway" id="UPA00558">
    <property type="reaction ID" value="UER00616"/>
</dbReference>
<dbReference type="Proteomes" id="UP000002676">
    <property type="component" value="Chromosome"/>
</dbReference>
<dbReference type="GO" id="GO:0005886">
    <property type="term" value="C:plasma membrane"/>
    <property type="evidence" value="ECO:0007669"/>
    <property type="project" value="UniProtKB-SubCell"/>
</dbReference>
<dbReference type="GO" id="GO:0004609">
    <property type="term" value="F:phosphatidylserine decarboxylase activity"/>
    <property type="evidence" value="ECO:0007669"/>
    <property type="project" value="UniProtKB-UniRule"/>
</dbReference>
<dbReference type="GO" id="GO:0006646">
    <property type="term" value="P:phosphatidylethanolamine biosynthetic process"/>
    <property type="evidence" value="ECO:0007669"/>
    <property type="project" value="UniProtKB-UniRule"/>
</dbReference>
<dbReference type="HAMAP" id="MF_00662">
    <property type="entry name" value="PS_decarb_PSD_B_type1"/>
    <property type="match status" value="1"/>
</dbReference>
<dbReference type="InterPro" id="IPR003817">
    <property type="entry name" value="PS_Dcarbxylase"/>
</dbReference>
<dbReference type="InterPro" id="IPR033177">
    <property type="entry name" value="PSD-B"/>
</dbReference>
<dbReference type="InterPro" id="IPR033178">
    <property type="entry name" value="PSD_type1_pro"/>
</dbReference>
<dbReference type="NCBIfam" id="TIGR00163">
    <property type="entry name" value="PS_decarb"/>
    <property type="match status" value="1"/>
</dbReference>
<dbReference type="PANTHER" id="PTHR10067">
    <property type="entry name" value="PHOSPHATIDYLSERINE DECARBOXYLASE"/>
    <property type="match status" value="1"/>
</dbReference>
<dbReference type="PANTHER" id="PTHR10067:SF6">
    <property type="entry name" value="PHOSPHATIDYLSERINE DECARBOXYLASE PROENZYME, MITOCHONDRIAL"/>
    <property type="match status" value="1"/>
</dbReference>
<dbReference type="Pfam" id="PF02666">
    <property type="entry name" value="PS_Dcarbxylase"/>
    <property type="match status" value="1"/>
</dbReference>
<protein>
    <recommendedName>
        <fullName evidence="1">Phosphatidylserine decarboxylase proenzyme</fullName>
        <ecNumber evidence="1">4.1.1.65</ecNumber>
    </recommendedName>
    <component>
        <recommendedName>
            <fullName evidence="1">Phosphatidylserine decarboxylase alpha chain</fullName>
        </recommendedName>
    </component>
    <component>
        <recommendedName>
            <fullName evidence="1">Phosphatidylserine decarboxylase beta chain</fullName>
        </recommendedName>
    </component>
</protein>